<keyword id="KW-0210">Decarboxylase</keyword>
<keyword id="KW-0456">Lyase</keyword>
<keyword id="KW-0665">Pyrimidine biosynthesis</keyword>
<evidence type="ECO:0000255" key="1">
    <source>
        <dbReference type="HAMAP-Rule" id="MF_01200"/>
    </source>
</evidence>
<organism>
    <name type="scientific">Campylobacter concisus (strain 13826)</name>
    <dbReference type="NCBI Taxonomy" id="360104"/>
    <lineage>
        <taxon>Bacteria</taxon>
        <taxon>Pseudomonadati</taxon>
        <taxon>Campylobacterota</taxon>
        <taxon>Epsilonproteobacteria</taxon>
        <taxon>Campylobacterales</taxon>
        <taxon>Campylobacteraceae</taxon>
        <taxon>Campylobacter</taxon>
    </lineage>
</organism>
<proteinExistence type="inferred from homology"/>
<name>PYRF_CAMC1</name>
<feature type="chain" id="PRO_1000073086" description="Orotidine 5'-phosphate decarboxylase">
    <location>
        <begin position="1"/>
        <end position="226"/>
    </location>
</feature>
<feature type="active site" description="Proton donor" evidence="1">
    <location>
        <position position="60"/>
    </location>
</feature>
<feature type="binding site" evidence="1">
    <location>
        <position position="8"/>
    </location>
    <ligand>
        <name>substrate</name>
    </ligand>
</feature>
<feature type="binding site" evidence="1">
    <location>
        <position position="30"/>
    </location>
    <ligand>
        <name>substrate</name>
    </ligand>
</feature>
<feature type="binding site" evidence="1">
    <location>
        <begin position="58"/>
        <end position="67"/>
    </location>
    <ligand>
        <name>substrate</name>
    </ligand>
</feature>
<feature type="binding site" evidence="1">
    <location>
        <position position="117"/>
    </location>
    <ligand>
        <name>substrate</name>
    </ligand>
</feature>
<feature type="binding site" evidence="1">
    <location>
        <position position="177"/>
    </location>
    <ligand>
        <name>substrate</name>
    </ligand>
</feature>
<feature type="binding site" evidence="1">
    <location>
        <position position="186"/>
    </location>
    <ligand>
        <name>substrate</name>
    </ligand>
</feature>
<feature type="binding site" evidence="1">
    <location>
        <position position="206"/>
    </location>
    <ligand>
        <name>substrate</name>
    </ligand>
</feature>
<feature type="binding site" evidence="1">
    <location>
        <position position="207"/>
    </location>
    <ligand>
        <name>substrate</name>
    </ligand>
</feature>
<comment type="function">
    <text evidence="1">Catalyzes the decarboxylation of orotidine 5'-monophosphate (OMP) to uridine 5'-monophosphate (UMP).</text>
</comment>
<comment type="catalytic activity">
    <reaction evidence="1">
        <text>orotidine 5'-phosphate + H(+) = UMP + CO2</text>
        <dbReference type="Rhea" id="RHEA:11596"/>
        <dbReference type="ChEBI" id="CHEBI:15378"/>
        <dbReference type="ChEBI" id="CHEBI:16526"/>
        <dbReference type="ChEBI" id="CHEBI:57538"/>
        <dbReference type="ChEBI" id="CHEBI:57865"/>
        <dbReference type="EC" id="4.1.1.23"/>
    </reaction>
</comment>
<comment type="pathway">
    <text evidence="1">Pyrimidine metabolism; UMP biosynthesis via de novo pathway; UMP from orotate: step 2/2.</text>
</comment>
<comment type="subunit">
    <text evidence="1">Homodimer.</text>
</comment>
<comment type="similarity">
    <text evidence="1">Belongs to the OMP decarboxylase family. Type 1 subfamily.</text>
</comment>
<gene>
    <name evidence="1" type="primary">pyrF</name>
    <name type="ordered locus">Ccon26_03260</name>
    <name type="ORF">CCC13826_0785</name>
</gene>
<sequence>MRLCVALDMASKDENLALVRELKGLDLWLKVGLRSYLRDGAKFIEELKGAGEFKIFLDLKLYDIPNTMADAAEVVSKIGVDMINLHASAGERAMKTVMERLNALQNRPLVLAVSALTSFSESEFEAVYNDTLSRSVRKFSQMSFEAGLDGMVCSVFESKLIKEVTNQNFITLCPGVRPFGESAGDQKRVANLVSAKQEDSDFIVVGRPIYENENPREICERILEQI</sequence>
<protein>
    <recommendedName>
        <fullName evidence="1">Orotidine 5'-phosphate decarboxylase</fullName>
        <ecNumber evidence="1">4.1.1.23</ecNumber>
    </recommendedName>
    <alternativeName>
        <fullName evidence="1">OMP decarboxylase</fullName>
        <shortName evidence="1">OMPDCase</shortName>
        <shortName evidence="1">OMPdecase</shortName>
    </alternativeName>
</protein>
<dbReference type="EC" id="4.1.1.23" evidence="1"/>
<dbReference type="EMBL" id="CP000792">
    <property type="protein sequence ID" value="ABW74734.1"/>
    <property type="molecule type" value="Genomic_DNA"/>
</dbReference>
<dbReference type="RefSeq" id="WP_048809741.1">
    <property type="nucleotide sequence ID" value="NC_009802.2"/>
</dbReference>
<dbReference type="SMR" id="A8Z6D0"/>
<dbReference type="STRING" id="360104.CCC13826_0785"/>
<dbReference type="KEGG" id="cco:CCC13826_0785"/>
<dbReference type="eggNOG" id="COG0284">
    <property type="taxonomic scope" value="Bacteria"/>
</dbReference>
<dbReference type="HOGENOM" id="CLU_067069_1_1_7"/>
<dbReference type="OrthoDB" id="9806203at2"/>
<dbReference type="UniPathway" id="UPA00070">
    <property type="reaction ID" value="UER00120"/>
</dbReference>
<dbReference type="Proteomes" id="UP000001121">
    <property type="component" value="Chromosome"/>
</dbReference>
<dbReference type="GO" id="GO:0005829">
    <property type="term" value="C:cytosol"/>
    <property type="evidence" value="ECO:0007669"/>
    <property type="project" value="TreeGrafter"/>
</dbReference>
<dbReference type="GO" id="GO:0004590">
    <property type="term" value="F:orotidine-5'-phosphate decarboxylase activity"/>
    <property type="evidence" value="ECO:0007669"/>
    <property type="project" value="UniProtKB-UniRule"/>
</dbReference>
<dbReference type="GO" id="GO:0006207">
    <property type="term" value="P:'de novo' pyrimidine nucleobase biosynthetic process"/>
    <property type="evidence" value="ECO:0007669"/>
    <property type="project" value="InterPro"/>
</dbReference>
<dbReference type="GO" id="GO:0044205">
    <property type="term" value="P:'de novo' UMP biosynthetic process"/>
    <property type="evidence" value="ECO:0007669"/>
    <property type="project" value="UniProtKB-UniRule"/>
</dbReference>
<dbReference type="CDD" id="cd04725">
    <property type="entry name" value="OMP_decarboxylase_like"/>
    <property type="match status" value="1"/>
</dbReference>
<dbReference type="Gene3D" id="3.20.20.70">
    <property type="entry name" value="Aldolase class I"/>
    <property type="match status" value="1"/>
</dbReference>
<dbReference type="HAMAP" id="MF_01200_B">
    <property type="entry name" value="OMPdecase_type1_B"/>
    <property type="match status" value="1"/>
</dbReference>
<dbReference type="InterPro" id="IPR013785">
    <property type="entry name" value="Aldolase_TIM"/>
</dbReference>
<dbReference type="InterPro" id="IPR014732">
    <property type="entry name" value="OMPdecase"/>
</dbReference>
<dbReference type="InterPro" id="IPR018089">
    <property type="entry name" value="OMPdecase_AS"/>
</dbReference>
<dbReference type="InterPro" id="IPR047596">
    <property type="entry name" value="OMPdecase_bac"/>
</dbReference>
<dbReference type="InterPro" id="IPR001754">
    <property type="entry name" value="OMPdeCOase_dom"/>
</dbReference>
<dbReference type="InterPro" id="IPR011060">
    <property type="entry name" value="RibuloseP-bd_barrel"/>
</dbReference>
<dbReference type="NCBIfam" id="NF001273">
    <property type="entry name" value="PRK00230.1"/>
    <property type="match status" value="1"/>
</dbReference>
<dbReference type="NCBIfam" id="TIGR01740">
    <property type="entry name" value="pyrF"/>
    <property type="match status" value="1"/>
</dbReference>
<dbReference type="PANTHER" id="PTHR32119">
    <property type="entry name" value="OROTIDINE 5'-PHOSPHATE DECARBOXYLASE"/>
    <property type="match status" value="1"/>
</dbReference>
<dbReference type="PANTHER" id="PTHR32119:SF2">
    <property type="entry name" value="OROTIDINE 5'-PHOSPHATE DECARBOXYLASE"/>
    <property type="match status" value="1"/>
</dbReference>
<dbReference type="Pfam" id="PF00215">
    <property type="entry name" value="OMPdecase"/>
    <property type="match status" value="1"/>
</dbReference>
<dbReference type="SMART" id="SM00934">
    <property type="entry name" value="OMPdecase"/>
    <property type="match status" value="1"/>
</dbReference>
<dbReference type="SUPFAM" id="SSF51366">
    <property type="entry name" value="Ribulose-phoshate binding barrel"/>
    <property type="match status" value="1"/>
</dbReference>
<dbReference type="PROSITE" id="PS00156">
    <property type="entry name" value="OMPDECASE"/>
    <property type="match status" value="1"/>
</dbReference>
<reference key="1">
    <citation type="submission" date="2007-10" db="EMBL/GenBank/DDBJ databases">
        <title>Genome sequence of Campylobacter concisus 13826 isolated from human feces.</title>
        <authorList>
            <person name="Fouts D.E."/>
            <person name="Mongodin E.F."/>
            <person name="Puiu D."/>
            <person name="Sebastian Y."/>
            <person name="Miller W.G."/>
            <person name="Mandrell R.E."/>
            <person name="On S."/>
            <person name="Nelson K.E."/>
        </authorList>
    </citation>
    <scope>NUCLEOTIDE SEQUENCE [LARGE SCALE GENOMIC DNA]</scope>
    <source>
        <strain>13826</strain>
    </source>
</reference>
<accession>A8Z6D0</accession>